<name>NRDC_MOUSE</name>
<reference key="1">
    <citation type="journal article" date="2005" name="Science">
        <title>The transcriptional landscape of the mammalian genome.</title>
        <authorList>
            <person name="Carninci P."/>
            <person name="Kasukawa T."/>
            <person name="Katayama S."/>
            <person name="Gough J."/>
            <person name="Frith M.C."/>
            <person name="Maeda N."/>
            <person name="Oyama R."/>
            <person name="Ravasi T."/>
            <person name="Lenhard B."/>
            <person name="Wells C."/>
            <person name="Kodzius R."/>
            <person name="Shimokawa K."/>
            <person name="Bajic V.B."/>
            <person name="Brenner S.E."/>
            <person name="Batalov S."/>
            <person name="Forrest A.R."/>
            <person name="Zavolan M."/>
            <person name="Davis M.J."/>
            <person name="Wilming L.G."/>
            <person name="Aidinis V."/>
            <person name="Allen J.E."/>
            <person name="Ambesi-Impiombato A."/>
            <person name="Apweiler R."/>
            <person name="Aturaliya R.N."/>
            <person name="Bailey T.L."/>
            <person name="Bansal M."/>
            <person name="Baxter L."/>
            <person name="Beisel K.W."/>
            <person name="Bersano T."/>
            <person name="Bono H."/>
            <person name="Chalk A.M."/>
            <person name="Chiu K.P."/>
            <person name="Choudhary V."/>
            <person name="Christoffels A."/>
            <person name="Clutterbuck D.R."/>
            <person name="Crowe M.L."/>
            <person name="Dalla E."/>
            <person name="Dalrymple B.P."/>
            <person name="de Bono B."/>
            <person name="Della Gatta G."/>
            <person name="di Bernardo D."/>
            <person name="Down T."/>
            <person name="Engstrom P."/>
            <person name="Fagiolini M."/>
            <person name="Faulkner G."/>
            <person name="Fletcher C.F."/>
            <person name="Fukushima T."/>
            <person name="Furuno M."/>
            <person name="Futaki S."/>
            <person name="Gariboldi M."/>
            <person name="Georgii-Hemming P."/>
            <person name="Gingeras T.R."/>
            <person name="Gojobori T."/>
            <person name="Green R.E."/>
            <person name="Gustincich S."/>
            <person name="Harbers M."/>
            <person name="Hayashi Y."/>
            <person name="Hensch T.K."/>
            <person name="Hirokawa N."/>
            <person name="Hill D."/>
            <person name="Huminiecki L."/>
            <person name="Iacono M."/>
            <person name="Ikeo K."/>
            <person name="Iwama A."/>
            <person name="Ishikawa T."/>
            <person name="Jakt M."/>
            <person name="Kanapin A."/>
            <person name="Katoh M."/>
            <person name="Kawasawa Y."/>
            <person name="Kelso J."/>
            <person name="Kitamura H."/>
            <person name="Kitano H."/>
            <person name="Kollias G."/>
            <person name="Krishnan S.P."/>
            <person name="Kruger A."/>
            <person name="Kummerfeld S.K."/>
            <person name="Kurochkin I.V."/>
            <person name="Lareau L.F."/>
            <person name="Lazarevic D."/>
            <person name="Lipovich L."/>
            <person name="Liu J."/>
            <person name="Liuni S."/>
            <person name="McWilliam S."/>
            <person name="Madan Babu M."/>
            <person name="Madera M."/>
            <person name="Marchionni L."/>
            <person name="Matsuda H."/>
            <person name="Matsuzawa S."/>
            <person name="Miki H."/>
            <person name="Mignone F."/>
            <person name="Miyake S."/>
            <person name="Morris K."/>
            <person name="Mottagui-Tabar S."/>
            <person name="Mulder N."/>
            <person name="Nakano N."/>
            <person name="Nakauchi H."/>
            <person name="Ng P."/>
            <person name="Nilsson R."/>
            <person name="Nishiguchi S."/>
            <person name="Nishikawa S."/>
            <person name="Nori F."/>
            <person name="Ohara O."/>
            <person name="Okazaki Y."/>
            <person name="Orlando V."/>
            <person name="Pang K.C."/>
            <person name="Pavan W.J."/>
            <person name="Pavesi G."/>
            <person name="Pesole G."/>
            <person name="Petrovsky N."/>
            <person name="Piazza S."/>
            <person name="Reed J."/>
            <person name="Reid J.F."/>
            <person name="Ring B.Z."/>
            <person name="Ringwald M."/>
            <person name="Rost B."/>
            <person name="Ruan Y."/>
            <person name="Salzberg S.L."/>
            <person name="Sandelin A."/>
            <person name="Schneider C."/>
            <person name="Schoenbach C."/>
            <person name="Sekiguchi K."/>
            <person name="Semple C.A."/>
            <person name="Seno S."/>
            <person name="Sessa L."/>
            <person name="Sheng Y."/>
            <person name="Shibata Y."/>
            <person name="Shimada H."/>
            <person name="Shimada K."/>
            <person name="Silva D."/>
            <person name="Sinclair B."/>
            <person name="Sperling S."/>
            <person name="Stupka E."/>
            <person name="Sugiura K."/>
            <person name="Sultana R."/>
            <person name="Takenaka Y."/>
            <person name="Taki K."/>
            <person name="Tammoja K."/>
            <person name="Tan S.L."/>
            <person name="Tang S."/>
            <person name="Taylor M.S."/>
            <person name="Tegner J."/>
            <person name="Teichmann S.A."/>
            <person name="Ueda H.R."/>
            <person name="van Nimwegen E."/>
            <person name="Verardo R."/>
            <person name="Wei C.L."/>
            <person name="Yagi K."/>
            <person name="Yamanishi H."/>
            <person name="Zabarovsky E."/>
            <person name="Zhu S."/>
            <person name="Zimmer A."/>
            <person name="Hide W."/>
            <person name="Bult C."/>
            <person name="Grimmond S.M."/>
            <person name="Teasdale R.D."/>
            <person name="Liu E.T."/>
            <person name="Brusic V."/>
            <person name="Quackenbush J."/>
            <person name="Wahlestedt C."/>
            <person name="Mattick J.S."/>
            <person name="Hume D.A."/>
            <person name="Kai C."/>
            <person name="Sasaki D."/>
            <person name="Tomaru Y."/>
            <person name="Fukuda S."/>
            <person name="Kanamori-Katayama M."/>
            <person name="Suzuki M."/>
            <person name="Aoki J."/>
            <person name="Arakawa T."/>
            <person name="Iida J."/>
            <person name="Imamura K."/>
            <person name="Itoh M."/>
            <person name="Kato T."/>
            <person name="Kawaji H."/>
            <person name="Kawagashira N."/>
            <person name="Kawashima T."/>
            <person name="Kojima M."/>
            <person name="Kondo S."/>
            <person name="Konno H."/>
            <person name="Nakano K."/>
            <person name="Ninomiya N."/>
            <person name="Nishio T."/>
            <person name="Okada M."/>
            <person name="Plessy C."/>
            <person name="Shibata K."/>
            <person name="Shiraki T."/>
            <person name="Suzuki S."/>
            <person name="Tagami M."/>
            <person name="Waki K."/>
            <person name="Watahiki A."/>
            <person name="Okamura-Oho Y."/>
            <person name="Suzuki H."/>
            <person name="Kawai J."/>
            <person name="Hayashizaki Y."/>
        </authorList>
    </citation>
    <scope>NUCLEOTIDE SEQUENCE [LARGE SCALE MRNA]</scope>
    <source>
        <strain>C57BL/6J</strain>
        <tissue>Testis</tissue>
    </source>
</reference>
<reference key="2">
    <citation type="journal article" date="2004" name="Genome Res.">
        <title>The status, quality, and expansion of the NIH full-length cDNA project: the Mammalian Gene Collection (MGC).</title>
        <authorList>
            <consortium name="The MGC Project Team"/>
        </authorList>
    </citation>
    <scope>NUCLEOTIDE SEQUENCE [LARGE SCALE MRNA]</scope>
    <source>
        <strain>FVB/N</strain>
        <tissue>Kidney</tissue>
    </source>
</reference>
<reference key="3">
    <citation type="journal article" date="2007" name="Proc. Natl. Acad. Sci. U.S.A.">
        <title>Large-scale phosphorylation analysis of mouse liver.</title>
        <authorList>
            <person name="Villen J."/>
            <person name="Beausoleil S.A."/>
            <person name="Gerber S.A."/>
            <person name="Gygi S.P."/>
        </authorList>
    </citation>
    <scope>PHOSPHORYLATION [LARGE SCALE ANALYSIS] AT SER-85</scope>
    <scope>IDENTIFICATION BY MASS SPECTROMETRY [LARGE SCALE ANALYSIS]</scope>
    <source>
        <tissue>Liver</tissue>
    </source>
</reference>
<reference key="4">
    <citation type="journal article" date="2009" name="Mol. Cell. Proteomics">
        <title>Large scale localization of protein phosphorylation by use of electron capture dissociation mass spectrometry.</title>
        <authorList>
            <person name="Sweet S.M."/>
            <person name="Bailey C.M."/>
            <person name="Cunningham D.L."/>
            <person name="Heath J.K."/>
            <person name="Cooper H.J."/>
        </authorList>
    </citation>
    <scope>PHOSPHORYLATION [LARGE SCALE ANALYSIS] AT SER-85</scope>
    <scope>IDENTIFICATION BY MASS SPECTROMETRY [LARGE SCALE ANALYSIS]</scope>
    <source>
        <tissue>Embryonic fibroblast</tissue>
    </source>
</reference>
<reference key="5">
    <citation type="journal article" date="2010" name="Cell">
        <title>A tissue-specific atlas of mouse protein phosphorylation and expression.</title>
        <authorList>
            <person name="Huttlin E.L."/>
            <person name="Jedrychowski M.P."/>
            <person name="Elias J.E."/>
            <person name="Goswami T."/>
            <person name="Rad R."/>
            <person name="Beausoleil S.A."/>
            <person name="Villen J."/>
            <person name="Haas W."/>
            <person name="Sowa M.E."/>
            <person name="Gygi S.P."/>
        </authorList>
    </citation>
    <scope>PHOSPHORYLATION [LARGE SCALE ANALYSIS] AT SER-85</scope>
    <scope>IDENTIFICATION BY MASS SPECTROMETRY [LARGE SCALE ANALYSIS]</scope>
    <source>
        <tissue>Brain</tissue>
        <tissue>Brown adipose tissue</tissue>
        <tissue>Heart</tissue>
        <tissue>Kidney</tissue>
        <tissue>Liver</tissue>
        <tissue>Lung</tissue>
        <tissue>Pancreas</tissue>
        <tissue>Spleen</tissue>
        <tissue>Testis</tissue>
    </source>
</reference>
<reference key="6">
    <citation type="journal article" date="2009" name="Nat. Neurosci.">
        <title>Nardilysin regulates axonal maturation and myelination in the central and peripheral nervous system.</title>
        <authorList>
            <person name="Ohno M."/>
            <person name="Hiraoka Y."/>
            <person name="Matsuoka T."/>
            <person name="Tomimoto H."/>
            <person name="Takao K."/>
            <person name="Miyakawa T."/>
            <person name="Oshima N."/>
            <person name="Kiyonari H."/>
            <person name="Kimura T."/>
            <person name="Kita T."/>
            <person name="Nishi E."/>
        </authorList>
    </citation>
    <scope>FUNCTION</scope>
    <scope>TISSUE SPECIFICITY</scope>
    <scope>SUBCELLULAR LOCATION</scope>
    <scope>DISRUPTION PHENOTYPE</scope>
    <scope>INTERACTION WITH BACE1 AND NRG1</scope>
</reference>
<reference key="7">
    <citation type="journal article" date="2017" name="Neuron">
        <title>Loss of Nardilysin, a Mitochondrial Co-chaperone for alpha-Ketoglutarate Dehydrogenase, Promotes mTORC1 Activation and Neurodegeneration.</title>
        <authorList>
            <person name="Yoon W.H."/>
            <person name="Sandoval H."/>
            <person name="Nagarkar-Jaiswal S."/>
            <person name="Jaiswal M."/>
            <person name="Yamamoto S."/>
            <person name="Haelterman N.A."/>
            <person name="Putluri N."/>
            <person name="Putluri V."/>
            <person name="Sreekumar A."/>
            <person name="Tos T."/>
            <person name="Aksoy A."/>
            <person name="Donti T."/>
            <person name="Graham B.H."/>
            <person name="Ohno M."/>
            <person name="Nishi E."/>
            <person name="Hunter J."/>
            <person name="Muzny D.M."/>
            <person name="Carmichael J."/>
            <person name="Shen J."/>
            <person name="Arboleda V.A."/>
            <person name="Nelson S.F."/>
            <person name="Wangler M.F."/>
            <person name="Karaca E."/>
            <person name="Lupski J.R."/>
            <person name="Bellen H.J."/>
        </authorList>
    </citation>
    <scope>FUNCTION</scope>
</reference>
<sequence length="1161" mass="132891">MLRRVAVAAVCVTGRKLRCEAGRELTALGRIEARGLCEESSKPFPTLTMPGRNKAKSTCSCPDLQPNGQDLGESGRLARLGADESEEEGRSFSNVGDPEIIKSPSDPKQYRYIKLQNGLQALLISDLSNVEGKTGNATDEEEEEEEEEEEEDDDDDDDDDDDDEDSGAEIQDDDEEGFDDEEEFDDDDDDEHDDDDLENEENELEELEERVEARKKTTEKQSAAALCVGVGSFADPDDLPGLAHFLEHMVFMGSLKYPDENGFDAFLKKHGGSDNASTDCERTVFQFDVQRKYFKEALDRWAQFFIHPLMIRDAIDREVEAVDSEYQLARPSDANRKEMLFGSLARPGHPMGKFFWGNAETLKHEPKKNNIDTHARLREFWMRYYSAHYMTLVVQSKETLDTLEKWVTEIFSQIPNNGLPKPNFSHLTDPFDTPAFNKLYRVVPIRKIHALTITWALPPQQQHYRVKPLHYISWLVGHEGKGSILSYLRKKCWALALFGGNGETGFEQNSTYSVFSISITLTDEGYEHFYEVAHTVFQYLKMLQKLGPEKRVFEEIQKIEDNEFHYQEQTDPVEYVENMCENMQLYPRQDFLTGDQLLFEYKPEVIAEALNQLVPQKANLVLLSGANEGRCDLKEKWFGTQYSIEDIENSWTELWKSNFDLNPDLHLPAENKYIATDFTLKAFDCPETEYPAKIVNTAQGCLWYKKDNKFKIPKAYIRFHLISPLIQKSAANVVLFDIFVNILTHNLAEPAYEADVAQLEYKLVAGEHGLIIRVKGFNHKLPLLFQLIIDYLTEFSSTPAVFTMITEQLKKTYFNILIKPETLAKDVRLLILEYSRWSMIDKYQALMDGLSLDSLLNFVKDFKSQLFVEGLVQGNVTSTESMDFLKYVVDKLNFAPLEREMPVQFQVVELPSGHHLCKVRALNKGDANSEVTVYYQSGTRSLREYTLMELLVMHMEEPCFDFLRTKQTLGYHVYPTCRNTSGILGFSVTVGTQATKYNSETVDKKIEEFLSSFEEKIENLTEDAFNTQVTALIKLKECEDTHLGEEVDRNWNEVVTQQYLFDRLAHEIEALKSFSKSDLVSWFKAHRGPGSKMLSVHVVGYGKYELEEDGAPFGEDSNSREGMQLTYLPPSPVLAESTTPITDIRAFTATLSLFPYHKIVK</sequence>
<evidence type="ECO:0000250" key="1"/>
<evidence type="ECO:0000250" key="2">
    <source>
        <dbReference type="UniProtKB" id="O43847"/>
    </source>
</evidence>
<evidence type="ECO:0000255" key="3"/>
<evidence type="ECO:0000255" key="4">
    <source>
        <dbReference type="PROSITE-ProRule" id="PRU10096"/>
    </source>
</evidence>
<evidence type="ECO:0000256" key="5">
    <source>
        <dbReference type="SAM" id="MobiDB-lite"/>
    </source>
</evidence>
<evidence type="ECO:0000269" key="6">
    <source>
    </source>
</evidence>
<evidence type="ECO:0000269" key="7">
    <source>
    </source>
</evidence>
<evidence type="ECO:0000305" key="8"/>
<evidence type="ECO:0007744" key="9">
    <source>
    </source>
</evidence>
<evidence type="ECO:0007744" key="10">
    <source>
    </source>
</evidence>
<evidence type="ECO:0007744" key="11">
    <source>
    </source>
</evidence>
<comment type="function">
    <text evidence="6 7">Cleaves peptide substrates on the N-terminus of arginine residues in dibasic pairs. Is a critical activator of BACE1- and ADAM17-mediated pro-neuregulin ectodomain shedding, involved in the positive regulation of axonal maturation and myelination (PubMed:19935654). Required for proper functioning of 2-oxoglutarate dehydrogenase (OGDH) (PubMed:28017472).</text>
</comment>
<comment type="catalytic activity">
    <reaction>
        <text>Hydrolysis of polypeptides, preferably at -Xaa-|-Arg-Lys-, and less commonly at -Arg-|-Arg-Xaa-, in which Xaa is not Arg or Lys.</text>
        <dbReference type="EC" id="3.4.24.61"/>
    </reaction>
</comment>
<comment type="cofactor">
    <cofactor evidence="1">
        <name>Zn(2+)</name>
        <dbReference type="ChEBI" id="CHEBI:29105"/>
    </cofactor>
    <text evidence="1">Binds 1 zinc ion per subunit.</text>
</comment>
<comment type="subunit">
    <text evidence="6">Interacts with BACE1 and NRG1.</text>
</comment>
<comment type="subcellular location">
    <subcellularLocation>
        <location evidence="2">Mitochondrion</location>
    </subcellularLocation>
    <subcellularLocation>
        <location evidence="6">Cell projection</location>
        <location evidence="6">Dendrite</location>
    </subcellularLocation>
</comment>
<comment type="tissue specificity">
    <text evidence="6">Highly expressed in brain of early postnatal mice but expressed at a lower level in the brains of adult mice. Expression is high in cortical neurons, and lower in neurons in the striatum. Very low expression detected in the corpus callosum. Also expressed in the gray matter in spinal cord and dorsal root ganglia.</text>
</comment>
<comment type="disruption phenotype">
    <text evidence="6">Knockout mice are born at the expected Mendelian rate, but high lethality is observed within 48 hours from birth. Surviving mice are smaller than wild-type animals, have several neurological defects, impaired motor activity, and deficits of working memory. The cerebral cortex is thin and lateral ventricles are enlarged. The volume and proportion of myelinated axons is markedly reduced in both central and peripheral nervous system.</text>
</comment>
<comment type="similarity">
    <text evidence="8">Belongs to the peptidase M16 family.</text>
</comment>
<accession>Q8BHG1</accession>
<gene>
    <name evidence="2" type="primary">Nrdc</name>
    <name type="synonym">Nrd1</name>
</gene>
<protein>
    <recommendedName>
        <fullName>Nardilysin</fullName>
        <ecNumber>3.4.24.61</ecNumber>
    </recommendedName>
    <alternativeName>
        <fullName>N-arginine dibasic convertase</fullName>
        <shortName>NRD convertase</shortName>
        <shortName>NRD-C</shortName>
    </alternativeName>
    <alternativeName>
        <fullName evidence="2">Nardilysin convertase</fullName>
    </alternativeName>
</protein>
<organism>
    <name type="scientific">Mus musculus</name>
    <name type="common">Mouse</name>
    <dbReference type="NCBI Taxonomy" id="10090"/>
    <lineage>
        <taxon>Eukaryota</taxon>
        <taxon>Metazoa</taxon>
        <taxon>Chordata</taxon>
        <taxon>Craniata</taxon>
        <taxon>Vertebrata</taxon>
        <taxon>Euteleostomi</taxon>
        <taxon>Mammalia</taxon>
        <taxon>Eutheria</taxon>
        <taxon>Euarchontoglires</taxon>
        <taxon>Glires</taxon>
        <taxon>Rodentia</taxon>
        <taxon>Myomorpha</taxon>
        <taxon>Muroidea</taxon>
        <taxon>Muridae</taxon>
        <taxon>Murinae</taxon>
        <taxon>Mus</taxon>
        <taxon>Mus</taxon>
    </lineage>
</organism>
<keyword id="KW-0966">Cell projection</keyword>
<keyword id="KW-0378">Hydrolase</keyword>
<keyword id="KW-0479">Metal-binding</keyword>
<keyword id="KW-0482">Metalloprotease</keyword>
<keyword id="KW-0496">Mitochondrion</keyword>
<keyword id="KW-0597">Phosphoprotein</keyword>
<keyword id="KW-0645">Protease</keyword>
<keyword id="KW-1185">Reference proteome</keyword>
<keyword id="KW-0732">Signal</keyword>
<keyword id="KW-0862">Zinc</keyword>
<proteinExistence type="evidence at protein level"/>
<dbReference type="EC" id="3.4.24.61"/>
<dbReference type="EMBL" id="AK031548">
    <property type="protein sequence ID" value="BAC27445.1"/>
    <property type="molecule type" value="mRNA"/>
</dbReference>
<dbReference type="EMBL" id="BC036128">
    <property type="protein sequence ID" value="AAH36128.1"/>
    <property type="molecule type" value="mRNA"/>
</dbReference>
<dbReference type="CCDS" id="CCDS18460.1"/>
<dbReference type="RefSeq" id="NP_666262.2">
    <property type="nucleotide sequence ID" value="NM_146150.2"/>
</dbReference>
<dbReference type="SMR" id="Q8BHG1"/>
<dbReference type="BioGRID" id="230982">
    <property type="interactions" value="14"/>
</dbReference>
<dbReference type="FunCoup" id="Q8BHG1">
    <property type="interactions" value="2275"/>
</dbReference>
<dbReference type="STRING" id="10090.ENSMUSP00000102255"/>
<dbReference type="MEROPS" id="M16.005"/>
<dbReference type="GlyGen" id="Q8BHG1">
    <property type="glycosylation" value="3 sites, 1 N-linked glycan (1 site), 1 O-linked glycan (2 sites)"/>
</dbReference>
<dbReference type="iPTMnet" id="Q8BHG1"/>
<dbReference type="PhosphoSitePlus" id="Q8BHG1"/>
<dbReference type="SwissPalm" id="Q8BHG1"/>
<dbReference type="jPOST" id="Q8BHG1"/>
<dbReference type="PaxDb" id="10090-ENSMUSP00000068328"/>
<dbReference type="ProteomicsDB" id="293728"/>
<dbReference type="Pumba" id="Q8BHG1"/>
<dbReference type="Antibodypedia" id="19043">
    <property type="antibodies" value="153 antibodies from 26 providers"/>
</dbReference>
<dbReference type="DNASU" id="230598"/>
<dbReference type="Ensembl" id="ENSMUST00000065977.11">
    <property type="protein sequence ID" value="ENSMUSP00000068328.5"/>
    <property type="gene ID" value="ENSMUSG00000053510.13"/>
</dbReference>
<dbReference type="GeneID" id="230598"/>
<dbReference type="KEGG" id="mmu:230598"/>
<dbReference type="UCSC" id="uc008ubw.1">
    <property type="organism name" value="mouse"/>
</dbReference>
<dbReference type="AGR" id="MGI:1201386"/>
<dbReference type="CTD" id="4898"/>
<dbReference type="MGI" id="MGI:1201386">
    <property type="gene designation" value="Nrdc"/>
</dbReference>
<dbReference type="VEuPathDB" id="HostDB:ENSMUSG00000053510"/>
<dbReference type="eggNOG" id="KOG0959">
    <property type="taxonomic scope" value="Eukaryota"/>
</dbReference>
<dbReference type="GeneTree" id="ENSGT00940000155026"/>
<dbReference type="HOGENOM" id="CLU_004639_1_0_1"/>
<dbReference type="InParanoid" id="Q8BHG1"/>
<dbReference type="OMA" id="INQVMEH"/>
<dbReference type="OrthoDB" id="4953at2759"/>
<dbReference type="PhylomeDB" id="Q8BHG1"/>
<dbReference type="TreeFam" id="TF106274"/>
<dbReference type="BRENDA" id="3.4.24.61">
    <property type="organism ID" value="3474"/>
</dbReference>
<dbReference type="BioGRID-ORCS" id="230598">
    <property type="hits" value="13 hits in 79 CRISPR screens"/>
</dbReference>
<dbReference type="ChiTaRS" id="Nrd1">
    <property type="organism name" value="mouse"/>
</dbReference>
<dbReference type="PRO" id="PR:Q8BHG1"/>
<dbReference type="Proteomes" id="UP000000589">
    <property type="component" value="Chromosome 4"/>
</dbReference>
<dbReference type="RNAct" id="Q8BHG1">
    <property type="molecule type" value="protein"/>
</dbReference>
<dbReference type="Bgee" id="ENSMUSG00000053510">
    <property type="expression patterns" value="Expressed in seminiferous tubule of testis and 262 other cell types or tissues"/>
</dbReference>
<dbReference type="ExpressionAtlas" id="Q8BHG1">
    <property type="expression patterns" value="baseline and differential"/>
</dbReference>
<dbReference type="GO" id="GO:0030425">
    <property type="term" value="C:dendrite"/>
    <property type="evidence" value="ECO:0007669"/>
    <property type="project" value="UniProtKB-SubCell"/>
</dbReference>
<dbReference type="GO" id="GO:0005739">
    <property type="term" value="C:mitochondrion"/>
    <property type="evidence" value="ECO:0007005"/>
    <property type="project" value="MGI"/>
</dbReference>
<dbReference type="GO" id="GO:0046872">
    <property type="term" value="F:metal ion binding"/>
    <property type="evidence" value="ECO:0007669"/>
    <property type="project" value="UniProtKB-KW"/>
</dbReference>
<dbReference type="GO" id="GO:0004222">
    <property type="term" value="F:metalloendopeptidase activity"/>
    <property type="evidence" value="ECO:0007669"/>
    <property type="project" value="UniProtKB-EC"/>
</dbReference>
<dbReference type="GO" id="GO:0008233">
    <property type="term" value="F:peptidase activity"/>
    <property type="evidence" value="ECO:0000266"/>
    <property type="project" value="MGI"/>
</dbReference>
<dbReference type="GO" id="GO:0120163">
    <property type="term" value="P:negative regulation of cold-induced thermogenesis"/>
    <property type="evidence" value="ECO:0000315"/>
    <property type="project" value="YuBioLab"/>
</dbReference>
<dbReference type="GO" id="GO:0050772">
    <property type="term" value="P:positive regulation of axonogenesis"/>
    <property type="evidence" value="ECO:0000315"/>
    <property type="project" value="UniProtKB"/>
</dbReference>
<dbReference type="GO" id="GO:0051044">
    <property type="term" value="P:positive regulation of membrane protein ectodomain proteolysis"/>
    <property type="evidence" value="ECO:0000314"/>
    <property type="project" value="UniProtKB"/>
</dbReference>
<dbReference type="GO" id="GO:0031643">
    <property type="term" value="P:positive regulation of myelination"/>
    <property type="evidence" value="ECO:0000315"/>
    <property type="project" value="UniProtKB"/>
</dbReference>
<dbReference type="GO" id="GO:0006508">
    <property type="term" value="P:proteolysis"/>
    <property type="evidence" value="ECO:0007669"/>
    <property type="project" value="UniProtKB-KW"/>
</dbReference>
<dbReference type="FunFam" id="3.30.830.10:FF:000005">
    <property type="entry name" value="nardilysin isoform X1"/>
    <property type="match status" value="1"/>
</dbReference>
<dbReference type="FunFam" id="3.30.830.10:FF:000019">
    <property type="entry name" value="nardilysin isoform X1"/>
    <property type="match status" value="1"/>
</dbReference>
<dbReference type="Gene3D" id="3.30.830.10">
    <property type="entry name" value="Metalloenzyme, LuxS/M16 peptidase-like"/>
    <property type="match status" value="4"/>
</dbReference>
<dbReference type="InterPro" id="IPR011249">
    <property type="entry name" value="Metalloenz_LuxS/M16"/>
</dbReference>
<dbReference type="InterPro" id="IPR011765">
    <property type="entry name" value="Pept_M16_N"/>
</dbReference>
<dbReference type="InterPro" id="IPR001431">
    <property type="entry name" value="Pept_M16_Zn_BS"/>
</dbReference>
<dbReference type="InterPro" id="IPR050626">
    <property type="entry name" value="Peptidase_M16"/>
</dbReference>
<dbReference type="InterPro" id="IPR007863">
    <property type="entry name" value="Peptidase_M16_C"/>
</dbReference>
<dbReference type="InterPro" id="IPR032632">
    <property type="entry name" value="Peptidase_M16_M"/>
</dbReference>
<dbReference type="PANTHER" id="PTHR43690:SF18">
    <property type="entry name" value="INSULIN-DEGRADING ENZYME-RELATED"/>
    <property type="match status" value="1"/>
</dbReference>
<dbReference type="PANTHER" id="PTHR43690">
    <property type="entry name" value="NARDILYSIN"/>
    <property type="match status" value="1"/>
</dbReference>
<dbReference type="Pfam" id="PF00675">
    <property type="entry name" value="Peptidase_M16"/>
    <property type="match status" value="1"/>
</dbReference>
<dbReference type="Pfam" id="PF05193">
    <property type="entry name" value="Peptidase_M16_C"/>
    <property type="match status" value="2"/>
</dbReference>
<dbReference type="Pfam" id="PF16187">
    <property type="entry name" value="Peptidase_M16_M"/>
    <property type="match status" value="1"/>
</dbReference>
<dbReference type="SUPFAM" id="SSF63411">
    <property type="entry name" value="LuxS/MPP-like metallohydrolase"/>
    <property type="match status" value="4"/>
</dbReference>
<dbReference type="PROSITE" id="PS00143">
    <property type="entry name" value="INSULINASE"/>
    <property type="match status" value="1"/>
</dbReference>
<feature type="signal peptide" evidence="3">
    <location>
        <begin position="1"/>
        <end position="18"/>
    </location>
</feature>
<feature type="chain" id="PRO_0000026756" description="Nardilysin">
    <location>
        <begin position="19"/>
        <end position="1161"/>
    </location>
</feature>
<feature type="region of interest" description="Disordered" evidence="5">
    <location>
        <begin position="49"/>
        <end position="103"/>
    </location>
</feature>
<feature type="region of interest" description="Disordered" evidence="5">
    <location>
        <begin position="130"/>
        <end position="218"/>
    </location>
</feature>
<feature type="compositionally biased region" description="Acidic residues" evidence="5">
    <location>
        <begin position="138"/>
        <end position="209"/>
    </location>
</feature>
<feature type="active site" description="Proton acceptor" evidence="4">
    <location>
        <position position="247"/>
    </location>
</feature>
<feature type="binding site" evidence="4">
    <location>
        <position position="244"/>
    </location>
    <ligand>
        <name>Zn(2+)</name>
        <dbReference type="ChEBI" id="CHEBI:29105"/>
    </ligand>
</feature>
<feature type="binding site" evidence="4">
    <location>
        <position position="248"/>
    </location>
    <ligand>
        <name>Zn(2+)</name>
        <dbReference type="ChEBI" id="CHEBI:29105"/>
    </ligand>
</feature>
<feature type="binding site" evidence="4">
    <location>
        <position position="325"/>
    </location>
    <ligand>
        <name>Zn(2+)</name>
        <dbReference type="ChEBI" id="CHEBI:29105"/>
    </ligand>
</feature>
<feature type="modified residue" description="Phosphoserine" evidence="9 10 11">
    <location>
        <position position="85"/>
    </location>
</feature>
<feature type="modified residue" description="Phosphoserine" evidence="2">
    <location>
        <position position="91"/>
    </location>
</feature>
<feature type="modified residue" description="Phosphoserine" evidence="2">
    <location>
        <position position="93"/>
    </location>
</feature>